<proteinExistence type="evidence at transcript level"/>
<evidence type="ECO:0000250" key="1"/>
<evidence type="ECO:0000255" key="2"/>
<evidence type="ECO:0000269" key="3">
    <source>
    </source>
</evidence>
<evidence type="ECO:0000305" key="4"/>
<sequence length="947" mass="107189">MNPKKNNNTFLSYFVCLFLLLEVGLGQNQISEIKVGVVLDLNTTFSKICLTSINLALSDFYKDHPNYRTRLALHVRDSMKDTVQASAAALDLIQNEQVSAIIGPIDSMQAKFMIKLANKTQVPTISFSATSPLLTSIKSDYFVRGTIDDSYQVKAIAAIFESFGWRSVVAIYVDNELGEGIMPYLFDALQDVQVDRSVIPSEANDDQILKELYKLMTRQTRVFVVHMASRLASRIFEKATEIGMMEEGYVWLMTNGMTHMMRHIHHGRSLNTIDGVLGVRSHVPKSKGLEDFRLRWKRNFKKENPWLRDDLSIFGLWAYDSTTALAMAVEKTNISSFPYNNASGSSNNMTDLGTLHVSRYGPSLLEALSEIRFNGLAGRFNLIDRQLESPKFEIINFVGNEERIVGFWTPSNGLVNVNSNKTTSFTGERFGPLIWPGKSTIVPKGWEIPTNGKKIKVGVPVKKGFFNFVEVITDPITNITTPKGYAIDIFEAALKKLPYSVIPQYYRFESPDDDYDDLVYKVDNGTLDAVVGDVTITAYRSLYADFTLPYTESGVSMMVPVRDNENKNTWVFLKPWGLDLWVTTACFFVLIGFVVWLFEHRVNTDFRGPPHHQIGTSFWFSFSTMVFAHREKVVSNLARFVVVVWCFVVLVLTQSYTANLTSFLTVQRFQPAAINVKDLIKNGDYVGYQHGAFVKDFLIKEGFNVSKLKPFGSSEECHALLSNGSISAAFDEVAYLRAILSQYCSKYAIVEPTFKTAGFGFAFPRNSPLTGDVSKAILNVTQGDEMQHIENKWFMKQNDCPDPKTALSSNRLSLRSFWGLFLIAGIASFLALLIFVFLFLYENRHTLCDDSEDSIWRKLTSLFRNFDEKDIKSHTFKSSAVHHVSSPMTQYIPSPSTLQIAPRPHSPSQDRAFELRRVSFTPNEERLTTQTIHFEDEESDIECVVEQ</sequence>
<dbReference type="EMBL" id="AJ311495">
    <property type="protein sequence ID" value="CAC29254.1"/>
    <property type="molecule type" value="mRNA"/>
</dbReference>
<dbReference type="EMBL" id="AC005315">
    <property type="protein sequence ID" value="AAC33237.1"/>
    <property type="status" value="ALT_SEQ"/>
    <property type="molecule type" value="Genomic_DNA"/>
</dbReference>
<dbReference type="EMBL" id="CP002685">
    <property type="protein sequence ID" value="AEC08212.1"/>
    <property type="molecule type" value="Genomic_DNA"/>
</dbReference>
<dbReference type="PIR" id="T02741">
    <property type="entry name" value="T02741"/>
</dbReference>
<dbReference type="RefSeq" id="NP_180475.2">
    <property type="nucleotide sequence ID" value="NM_128468.2"/>
</dbReference>
<dbReference type="SMR" id="Q9C5V5"/>
<dbReference type="FunCoup" id="Q9C5V5">
    <property type="interactions" value="180"/>
</dbReference>
<dbReference type="STRING" id="3702.Q9C5V5"/>
<dbReference type="GlyCosmos" id="Q9C5V5">
    <property type="glycosylation" value="12 sites, No reported glycans"/>
</dbReference>
<dbReference type="GlyGen" id="Q9C5V5">
    <property type="glycosylation" value="12 sites"/>
</dbReference>
<dbReference type="PaxDb" id="3702-AT2G29110.1"/>
<dbReference type="EnsemblPlants" id="AT2G29110.1">
    <property type="protein sequence ID" value="AT2G29110.1"/>
    <property type="gene ID" value="AT2G29110"/>
</dbReference>
<dbReference type="GeneID" id="817459"/>
<dbReference type="Gramene" id="AT2G29110.1">
    <property type="protein sequence ID" value="AT2G29110.1"/>
    <property type="gene ID" value="AT2G29110"/>
</dbReference>
<dbReference type="KEGG" id="ath:AT2G29110"/>
<dbReference type="Araport" id="AT2G29110"/>
<dbReference type="TAIR" id="AT2G29110">
    <property type="gene designation" value="GLR2.8"/>
</dbReference>
<dbReference type="eggNOG" id="KOG1052">
    <property type="taxonomic scope" value="Eukaryota"/>
</dbReference>
<dbReference type="HOGENOM" id="CLU_007358_0_2_1"/>
<dbReference type="InParanoid" id="Q9C5V5"/>
<dbReference type="OMA" id="NENRPEE"/>
<dbReference type="OrthoDB" id="5984008at2759"/>
<dbReference type="PhylomeDB" id="Q9C5V5"/>
<dbReference type="PRO" id="PR:Q9C5V5"/>
<dbReference type="Proteomes" id="UP000006548">
    <property type="component" value="Chromosome 2"/>
</dbReference>
<dbReference type="ExpressionAtlas" id="Q9C5V5">
    <property type="expression patterns" value="baseline and differential"/>
</dbReference>
<dbReference type="GO" id="GO:0005886">
    <property type="term" value="C:plasma membrane"/>
    <property type="evidence" value="ECO:0000250"/>
    <property type="project" value="UniProtKB"/>
</dbReference>
<dbReference type="GO" id="GO:0005262">
    <property type="term" value="F:calcium channel activity"/>
    <property type="evidence" value="ECO:0000250"/>
    <property type="project" value="UniProtKB"/>
</dbReference>
<dbReference type="GO" id="GO:0008066">
    <property type="term" value="F:glutamate receptor activity"/>
    <property type="evidence" value="ECO:0000250"/>
    <property type="project" value="UniProtKB"/>
</dbReference>
<dbReference type="GO" id="GO:0015276">
    <property type="term" value="F:ligand-gated monoatomic ion channel activity"/>
    <property type="evidence" value="ECO:0007669"/>
    <property type="project" value="InterPro"/>
</dbReference>
<dbReference type="GO" id="GO:0006816">
    <property type="term" value="P:calcium ion transport"/>
    <property type="evidence" value="ECO:0000250"/>
    <property type="project" value="UniProtKB"/>
</dbReference>
<dbReference type="GO" id="GO:0019722">
    <property type="term" value="P:calcium-mediated signaling"/>
    <property type="evidence" value="ECO:0000250"/>
    <property type="project" value="UniProtKB"/>
</dbReference>
<dbReference type="GO" id="GO:0071230">
    <property type="term" value="P:cellular response to amino acid stimulus"/>
    <property type="evidence" value="ECO:0000250"/>
    <property type="project" value="UniProtKB"/>
</dbReference>
<dbReference type="CDD" id="cd13686">
    <property type="entry name" value="GluR_Plant"/>
    <property type="match status" value="1"/>
</dbReference>
<dbReference type="CDD" id="cd19990">
    <property type="entry name" value="PBP1_GABAb_receptor_plant"/>
    <property type="match status" value="1"/>
</dbReference>
<dbReference type="FunFam" id="1.10.287.70:FF:000037">
    <property type="entry name" value="Glutamate receptor"/>
    <property type="match status" value="1"/>
</dbReference>
<dbReference type="FunFam" id="3.40.190.10:FF:000103">
    <property type="entry name" value="Glutamate receptor"/>
    <property type="match status" value="1"/>
</dbReference>
<dbReference type="FunFam" id="3.40.50.2300:FF:000081">
    <property type="entry name" value="Glutamate receptor"/>
    <property type="match status" value="1"/>
</dbReference>
<dbReference type="FunFam" id="3.40.50.2300:FF:000310">
    <property type="entry name" value="Glutamate receptor"/>
    <property type="match status" value="1"/>
</dbReference>
<dbReference type="FunFam" id="3.40.190.10:FF:000195">
    <property type="entry name" value="Glutamate receptor 2.7"/>
    <property type="match status" value="1"/>
</dbReference>
<dbReference type="Gene3D" id="1.10.287.70">
    <property type="match status" value="1"/>
</dbReference>
<dbReference type="Gene3D" id="3.40.50.2300">
    <property type="match status" value="2"/>
</dbReference>
<dbReference type="Gene3D" id="3.40.190.10">
    <property type="entry name" value="Periplasmic binding protein-like II"/>
    <property type="match status" value="2"/>
</dbReference>
<dbReference type="InterPro" id="IPR001828">
    <property type="entry name" value="ANF_lig-bd_rcpt"/>
</dbReference>
<dbReference type="InterPro" id="IPR044440">
    <property type="entry name" value="GABAb_receptor_plant_PBP1"/>
</dbReference>
<dbReference type="InterPro" id="IPR015683">
    <property type="entry name" value="Ionotropic_Glu_rcpt"/>
</dbReference>
<dbReference type="InterPro" id="IPR001320">
    <property type="entry name" value="Iontro_rcpt_C"/>
</dbReference>
<dbReference type="InterPro" id="IPR017103">
    <property type="entry name" value="Iontropic_Glu_rcpt_pln"/>
</dbReference>
<dbReference type="InterPro" id="IPR028082">
    <property type="entry name" value="Peripla_BP_I"/>
</dbReference>
<dbReference type="InterPro" id="IPR001638">
    <property type="entry name" value="Solute-binding_3/MltF_N"/>
</dbReference>
<dbReference type="PANTHER" id="PTHR34836">
    <property type="entry name" value="OS06G0188250 PROTEIN"/>
    <property type="match status" value="1"/>
</dbReference>
<dbReference type="PANTHER" id="PTHR34836:SF1">
    <property type="entry name" value="OS09G0428600 PROTEIN"/>
    <property type="match status" value="1"/>
</dbReference>
<dbReference type="Pfam" id="PF01094">
    <property type="entry name" value="ANF_receptor"/>
    <property type="match status" value="1"/>
</dbReference>
<dbReference type="Pfam" id="PF00060">
    <property type="entry name" value="Lig_chan"/>
    <property type="match status" value="1"/>
</dbReference>
<dbReference type="Pfam" id="PF00497">
    <property type="entry name" value="SBP_bac_3"/>
    <property type="match status" value="1"/>
</dbReference>
<dbReference type="PIRSF" id="PIRSF037090">
    <property type="entry name" value="Iontro_Glu-like_rcpt_pln"/>
    <property type="match status" value="1"/>
</dbReference>
<dbReference type="SMART" id="SM00079">
    <property type="entry name" value="PBPe"/>
    <property type="match status" value="1"/>
</dbReference>
<dbReference type="SUPFAM" id="SSF53822">
    <property type="entry name" value="Periplasmic binding protein-like I"/>
    <property type="match status" value="1"/>
</dbReference>
<dbReference type="SUPFAM" id="SSF53850">
    <property type="entry name" value="Periplasmic binding protein-like II"/>
    <property type="match status" value="1"/>
</dbReference>
<dbReference type="SUPFAM" id="SSF81324">
    <property type="entry name" value="Voltage-gated potassium channels"/>
    <property type="match status" value="1"/>
</dbReference>
<gene>
    <name type="primary">GLR2.8</name>
    <name type="synonym">GLUR9</name>
    <name type="ordered locus">At2g29110</name>
    <name type="ORF">T9I4.19</name>
</gene>
<protein>
    <recommendedName>
        <fullName>Glutamate receptor 2.8</fullName>
    </recommendedName>
    <alternativeName>
        <fullName>Ligand-gated ion channel 2.8</fullName>
    </alternativeName>
</protein>
<feature type="signal peptide" evidence="2">
    <location>
        <begin position="1"/>
        <end position="26"/>
    </location>
</feature>
<feature type="chain" id="PRO_0000011603" description="Glutamate receptor 2.8">
    <location>
        <begin position="27"/>
        <end position="947"/>
    </location>
</feature>
<feature type="topological domain" description="Extracellular" evidence="2">
    <location>
        <begin position="27"/>
        <end position="577"/>
    </location>
</feature>
<feature type="transmembrane region" description="Helical" evidence="2">
    <location>
        <begin position="578"/>
        <end position="598"/>
    </location>
</feature>
<feature type="topological domain" description="Cytoplasmic" evidence="2">
    <location>
        <begin position="599"/>
        <end position="607"/>
    </location>
</feature>
<feature type="transmembrane region" description="Helical" evidence="2">
    <location>
        <begin position="608"/>
        <end position="628"/>
    </location>
</feature>
<feature type="topological domain" description="Cytoplasmic" evidence="2">
    <location>
        <begin position="629"/>
        <end position="632"/>
    </location>
</feature>
<feature type="transmembrane region" description="Helical" evidence="2">
    <location>
        <begin position="633"/>
        <end position="653"/>
    </location>
</feature>
<feature type="topological domain" description="Extracellular" evidence="2">
    <location>
        <begin position="654"/>
        <end position="819"/>
    </location>
</feature>
<feature type="transmembrane region" description="Helical" evidence="2">
    <location>
        <begin position="820"/>
        <end position="840"/>
    </location>
</feature>
<feature type="topological domain" description="Cytoplasmic" evidence="2">
    <location>
        <begin position="841"/>
        <end position="947"/>
    </location>
</feature>
<feature type="glycosylation site" description="N-linked (GlcNAc...) asparagine" evidence="2">
    <location>
        <position position="42"/>
    </location>
</feature>
<feature type="glycosylation site" description="N-linked (GlcNAc...) asparagine" evidence="2">
    <location>
        <position position="118"/>
    </location>
</feature>
<feature type="glycosylation site" description="N-linked (GlcNAc...) asparagine" evidence="2">
    <location>
        <position position="333"/>
    </location>
</feature>
<feature type="glycosylation site" description="N-linked (GlcNAc...) asparagine" evidence="2">
    <location>
        <position position="341"/>
    </location>
</feature>
<feature type="glycosylation site" description="N-linked (GlcNAc...) asparagine" evidence="2">
    <location>
        <position position="348"/>
    </location>
</feature>
<feature type="glycosylation site" description="N-linked (GlcNAc...) asparagine" evidence="2">
    <location>
        <position position="420"/>
    </location>
</feature>
<feature type="glycosylation site" description="N-linked (GlcNAc...) asparagine" evidence="2">
    <location>
        <position position="478"/>
    </location>
</feature>
<feature type="glycosylation site" description="N-linked (GlcNAc...) asparagine" evidence="2">
    <location>
        <position position="524"/>
    </location>
</feature>
<feature type="glycosylation site" description="N-linked (GlcNAc...) asparagine" evidence="2">
    <location>
        <position position="659"/>
    </location>
</feature>
<feature type="glycosylation site" description="N-linked (GlcNAc...) asparagine" evidence="2">
    <location>
        <position position="704"/>
    </location>
</feature>
<feature type="glycosylation site" description="N-linked (GlcNAc...) asparagine" evidence="2">
    <location>
        <position position="723"/>
    </location>
</feature>
<feature type="glycosylation site" description="N-linked (GlcNAc...) asparagine" evidence="2">
    <location>
        <position position="779"/>
    </location>
</feature>
<feature type="sequence conflict" description="In Ref. 1; CAC29254." evidence="4" ref="1">
    <original>E</original>
    <variation>G</variation>
    <location>
        <position position="552"/>
    </location>
</feature>
<feature type="sequence conflict" description="In Ref. 1; CAC29254." evidence="4" ref="1">
    <original>K</original>
    <variation>Q</variation>
    <location>
        <position position="700"/>
    </location>
</feature>
<keyword id="KW-0325">Glycoprotein</keyword>
<keyword id="KW-0407">Ion channel</keyword>
<keyword id="KW-0406">Ion transport</keyword>
<keyword id="KW-1071">Ligand-gated ion channel</keyword>
<keyword id="KW-0472">Membrane</keyword>
<keyword id="KW-0675">Receptor</keyword>
<keyword id="KW-1185">Reference proteome</keyword>
<keyword id="KW-0732">Signal</keyword>
<keyword id="KW-0812">Transmembrane</keyword>
<keyword id="KW-1133">Transmembrane helix</keyword>
<keyword id="KW-0813">Transport</keyword>
<reference key="1">
    <citation type="journal article" date="2001" name="Science">
        <title>The identity of plant glutamate receptors.</title>
        <authorList>
            <person name="Lacombe B."/>
            <person name="Becker D."/>
            <person name="Hedrich R."/>
            <person name="DeSalle R."/>
            <person name="Hollmann M."/>
            <person name="Kwak J.M."/>
            <person name="Schroeder J.I."/>
            <person name="Le Novere N."/>
            <person name="Nam H.G."/>
            <person name="Spalding E.P."/>
            <person name="Tester M."/>
            <person name="Turano F.J."/>
            <person name="Chiu J."/>
            <person name="Coruzzi G."/>
        </authorList>
    </citation>
    <scope>NUCLEOTIDE SEQUENCE [MRNA]</scope>
    <scope>GENE FAMILY</scope>
    <scope>NOMENCLATURE</scope>
    <source>
        <strain>cv. Columbia</strain>
    </source>
</reference>
<reference key="2">
    <citation type="journal article" date="1999" name="Nature">
        <title>Sequence and analysis of chromosome 2 of the plant Arabidopsis thaliana.</title>
        <authorList>
            <person name="Lin X."/>
            <person name="Kaul S."/>
            <person name="Rounsley S.D."/>
            <person name="Shea T.P."/>
            <person name="Benito M.-I."/>
            <person name="Town C.D."/>
            <person name="Fujii C.Y."/>
            <person name="Mason T.M."/>
            <person name="Bowman C.L."/>
            <person name="Barnstead M.E."/>
            <person name="Feldblyum T.V."/>
            <person name="Buell C.R."/>
            <person name="Ketchum K.A."/>
            <person name="Lee J.J."/>
            <person name="Ronning C.M."/>
            <person name="Koo H.L."/>
            <person name="Moffat K.S."/>
            <person name="Cronin L.A."/>
            <person name="Shen M."/>
            <person name="Pai G."/>
            <person name="Van Aken S."/>
            <person name="Umayam L."/>
            <person name="Tallon L.J."/>
            <person name="Gill J.E."/>
            <person name="Adams M.D."/>
            <person name="Carrera A.J."/>
            <person name="Creasy T.H."/>
            <person name="Goodman H.M."/>
            <person name="Somerville C.R."/>
            <person name="Copenhaver G.P."/>
            <person name="Preuss D."/>
            <person name="Nierman W.C."/>
            <person name="White O."/>
            <person name="Eisen J.A."/>
            <person name="Salzberg S.L."/>
            <person name="Fraser C.M."/>
            <person name="Venter J.C."/>
        </authorList>
    </citation>
    <scope>NUCLEOTIDE SEQUENCE [LARGE SCALE GENOMIC DNA]</scope>
    <source>
        <strain>cv. Columbia</strain>
    </source>
</reference>
<reference key="3">
    <citation type="journal article" date="2017" name="Plant J.">
        <title>Araport11: a complete reannotation of the Arabidopsis thaliana reference genome.</title>
        <authorList>
            <person name="Cheng C.Y."/>
            <person name="Krishnakumar V."/>
            <person name="Chan A.P."/>
            <person name="Thibaud-Nissen F."/>
            <person name="Schobel S."/>
            <person name="Town C.D."/>
        </authorList>
    </citation>
    <scope>GENOME REANNOTATION</scope>
    <source>
        <strain>cv. Columbia</strain>
    </source>
</reference>
<reference key="4">
    <citation type="journal article" date="2002" name="Mol. Biol. Evol.">
        <title>Phylogenetic and expression analysis of the glutamate-receptor-like gene family in Arabidopsis thaliana.</title>
        <authorList>
            <person name="Chiu J.C."/>
            <person name="Brenner E.D."/>
            <person name="DeSalle R."/>
            <person name="Nitabach M.N."/>
            <person name="Holmes T.C."/>
            <person name="Coruzzi G.M."/>
        </authorList>
    </citation>
    <scope>TISSUE SPECIFICITY</scope>
</reference>
<accession>Q9C5V5</accession>
<accession>O81079</accession>
<name>GLR28_ARATH</name>
<comment type="function">
    <text>Glutamate-gated receptor that probably acts as a non-selective cation channel. May be involved in light-signal transduction and calcium homeostasis via the regulation of calcium influx into cells.</text>
</comment>
<comment type="subunit">
    <text evidence="1">May form heteromers.</text>
</comment>
<comment type="subcellular location">
    <subcellularLocation>
        <location>Membrane</location>
        <topology>Multi-pass membrane protein</topology>
    </subcellularLocation>
</comment>
<comment type="tissue specificity">
    <text evidence="3">Expressed predominantly in leaves.</text>
</comment>
<comment type="similarity">
    <text evidence="4">Belongs to the glutamate-gated ion channel (TC 1.A.10.1) family.</text>
</comment>
<comment type="sequence caution" evidence="4">
    <conflict type="erroneous gene model prediction">
        <sequence resource="EMBL-CDS" id="AAC33237"/>
    </conflict>
</comment>
<organism>
    <name type="scientific">Arabidopsis thaliana</name>
    <name type="common">Mouse-ear cress</name>
    <dbReference type="NCBI Taxonomy" id="3702"/>
    <lineage>
        <taxon>Eukaryota</taxon>
        <taxon>Viridiplantae</taxon>
        <taxon>Streptophyta</taxon>
        <taxon>Embryophyta</taxon>
        <taxon>Tracheophyta</taxon>
        <taxon>Spermatophyta</taxon>
        <taxon>Magnoliopsida</taxon>
        <taxon>eudicotyledons</taxon>
        <taxon>Gunneridae</taxon>
        <taxon>Pentapetalae</taxon>
        <taxon>rosids</taxon>
        <taxon>malvids</taxon>
        <taxon>Brassicales</taxon>
        <taxon>Brassicaceae</taxon>
        <taxon>Camelineae</taxon>
        <taxon>Arabidopsis</taxon>
    </lineage>
</organism>